<proteinExistence type="inferred from homology"/>
<sequence>MAIIDDARKGIITDEMKKISLIEKISPEKVRKRIVEGKIMLIRNEKYPSKKIVAIGKGLTTKVNINIGTSSEVVNLDMELEKVKIANKWGDTLMDLSTGGDLDLIRREIIKHSELPVGTVPVYQVFIESFKHKSGGAYFTEDDLLNTIEKHLKDGVAFMTIHAGLTKDLAIRALKSNRIIPIVSRGGDMIAGWMIHNNSENPYRKNWDYILEMFKQYDAVISLGDALRPGATGDAHDEFQIGELLETARLVKSALEKGVQVMVEGPGHVPLNEIAWDVKLMKKLTGGVPYYVLGPLPIDVGAPYDHIASAIGAAIASASGADLLCYLTPAEHLSLPTVEQVEEGAIAYRIAAHAGDIVKLGKKVRNWDDVVSYYRGKLEWEKMISSLIDPERAMKVYTQFGKPKVRACTMCGGYCPMMWAMEQVRKISD</sequence>
<accession>Q96ZH0</accession>
<name>THIC_SULTO</name>
<dbReference type="EC" id="4.1.99.17" evidence="1"/>
<dbReference type="EMBL" id="BA000023">
    <property type="protein sequence ID" value="BAB66955.1"/>
    <property type="molecule type" value="Genomic_DNA"/>
</dbReference>
<dbReference type="RefSeq" id="WP_010979932.1">
    <property type="nucleotide sequence ID" value="NC_003106.2"/>
</dbReference>
<dbReference type="SMR" id="Q96ZH0"/>
<dbReference type="STRING" id="273063.STK_18640"/>
<dbReference type="GeneID" id="1459920"/>
<dbReference type="KEGG" id="sto:STK_18640"/>
<dbReference type="PATRIC" id="fig|273063.9.peg.2123"/>
<dbReference type="eggNOG" id="arCOG02741">
    <property type="taxonomic scope" value="Archaea"/>
</dbReference>
<dbReference type="OrthoDB" id="335406at2157"/>
<dbReference type="UniPathway" id="UPA00060"/>
<dbReference type="Proteomes" id="UP000001015">
    <property type="component" value="Chromosome"/>
</dbReference>
<dbReference type="GO" id="GO:0051539">
    <property type="term" value="F:4 iron, 4 sulfur cluster binding"/>
    <property type="evidence" value="ECO:0007669"/>
    <property type="project" value="UniProtKB-KW"/>
</dbReference>
<dbReference type="GO" id="GO:0016830">
    <property type="term" value="F:carbon-carbon lyase activity"/>
    <property type="evidence" value="ECO:0007669"/>
    <property type="project" value="InterPro"/>
</dbReference>
<dbReference type="GO" id="GO:0008270">
    <property type="term" value="F:zinc ion binding"/>
    <property type="evidence" value="ECO:0007669"/>
    <property type="project" value="UniProtKB-UniRule"/>
</dbReference>
<dbReference type="GO" id="GO:0009228">
    <property type="term" value="P:thiamine biosynthetic process"/>
    <property type="evidence" value="ECO:0007669"/>
    <property type="project" value="UniProtKB-KW"/>
</dbReference>
<dbReference type="GO" id="GO:0009229">
    <property type="term" value="P:thiamine diphosphate biosynthetic process"/>
    <property type="evidence" value="ECO:0007669"/>
    <property type="project" value="UniProtKB-UniRule"/>
</dbReference>
<dbReference type="Gene3D" id="3.20.20.540">
    <property type="entry name" value="Radical SAM ThiC family, central domain"/>
    <property type="match status" value="1"/>
</dbReference>
<dbReference type="HAMAP" id="MF_00089">
    <property type="entry name" value="ThiC"/>
    <property type="match status" value="1"/>
</dbReference>
<dbReference type="InterPro" id="IPR037509">
    <property type="entry name" value="ThiC"/>
</dbReference>
<dbReference type="InterPro" id="IPR038521">
    <property type="entry name" value="ThiC/Bza_core_dom"/>
</dbReference>
<dbReference type="InterPro" id="IPR002817">
    <property type="entry name" value="ThiC/BzaA/B"/>
</dbReference>
<dbReference type="NCBIfam" id="NF009895">
    <property type="entry name" value="PRK13352.1"/>
    <property type="match status" value="1"/>
</dbReference>
<dbReference type="NCBIfam" id="TIGR00190">
    <property type="entry name" value="thiC"/>
    <property type="match status" value="1"/>
</dbReference>
<dbReference type="PANTHER" id="PTHR30557:SF1">
    <property type="entry name" value="PHOSPHOMETHYLPYRIMIDINE SYNTHASE, CHLOROPLASTIC"/>
    <property type="match status" value="1"/>
</dbReference>
<dbReference type="PANTHER" id="PTHR30557">
    <property type="entry name" value="THIAMINE BIOSYNTHESIS PROTEIN THIC"/>
    <property type="match status" value="1"/>
</dbReference>
<dbReference type="Pfam" id="PF01964">
    <property type="entry name" value="ThiC_Rad_SAM"/>
    <property type="match status" value="1"/>
</dbReference>
<dbReference type="SFLD" id="SFLDF00407">
    <property type="entry name" value="phosphomethylpyrimidine_syntha"/>
    <property type="match status" value="1"/>
</dbReference>
<dbReference type="SFLD" id="SFLDG01114">
    <property type="entry name" value="phosphomethylpyrimidine_syntha"/>
    <property type="match status" value="1"/>
</dbReference>
<dbReference type="SFLD" id="SFLDS00113">
    <property type="entry name" value="Radical_SAM_Phosphomethylpyrim"/>
    <property type="match status" value="1"/>
</dbReference>
<organism>
    <name type="scientific">Sulfurisphaera tokodaii (strain DSM 16993 / JCM 10545 / NBRC 100140 / 7)</name>
    <name type="common">Sulfolobus tokodaii</name>
    <dbReference type="NCBI Taxonomy" id="273063"/>
    <lineage>
        <taxon>Archaea</taxon>
        <taxon>Thermoproteota</taxon>
        <taxon>Thermoprotei</taxon>
        <taxon>Sulfolobales</taxon>
        <taxon>Sulfolobaceae</taxon>
        <taxon>Sulfurisphaera</taxon>
    </lineage>
</organism>
<reference key="1">
    <citation type="journal article" date="2001" name="DNA Res.">
        <title>Complete genome sequence of an aerobic thermoacidophilic Crenarchaeon, Sulfolobus tokodaii strain7.</title>
        <authorList>
            <person name="Kawarabayasi Y."/>
            <person name="Hino Y."/>
            <person name="Horikawa H."/>
            <person name="Jin-no K."/>
            <person name="Takahashi M."/>
            <person name="Sekine M."/>
            <person name="Baba S."/>
            <person name="Ankai A."/>
            <person name="Kosugi H."/>
            <person name="Hosoyama A."/>
            <person name="Fukui S."/>
            <person name="Nagai Y."/>
            <person name="Nishijima K."/>
            <person name="Otsuka R."/>
            <person name="Nakazawa H."/>
            <person name="Takamiya M."/>
            <person name="Kato Y."/>
            <person name="Yoshizawa T."/>
            <person name="Tanaka T."/>
            <person name="Kudoh Y."/>
            <person name="Yamazaki J."/>
            <person name="Kushida N."/>
            <person name="Oguchi A."/>
            <person name="Aoki K."/>
            <person name="Masuda S."/>
            <person name="Yanagii M."/>
            <person name="Nishimura M."/>
            <person name="Yamagishi A."/>
            <person name="Oshima T."/>
            <person name="Kikuchi H."/>
        </authorList>
    </citation>
    <scope>NUCLEOTIDE SEQUENCE [LARGE SCALE GENOMIC DNA]</scope>
    <source>
        <strain>DSM 16993 / JCM 10545 / NBRC 100140 / 7</strain>
    </source>
</reference>
<feature type="chain" id="PRO_0000152876" description="Phosphomethylpyrimidine synthase">
    <location>
        <begin position="1"/>
        <end position="429"/>
    </location>
</feature>
<feature type="binding site" evidence="1">
    <location>
        <position position="66"/>
    </location>
    <ligand>
        <name>substrate</name>
    </ligand>
</feature>
<feature type="binding site" evidence="1">
    <location>
        <position position="94"/>
    </location>
    <ligand>
        <name>substrate</name>
    </ligand>
</feature>
<feature type="binding site" evidence="1">
    <location>
        <position position="123"/>
    </location>
    <ligand>
        <name>substrate</name>
    </ligand>
</feature>
<feature type="binding site" evidence="1">
    <location>
        <position position="162"/>
    </location>
    <ligand>
        <name>substrate</name>
    </ligand>
</feature>
<feature type="binding site" evidence="1">
    <location>
        <begin position="184"/>
        <end position="186"/>
    </location>
    <ligand>
        <name>substrate</name>
    </ligand>
</feature>
<feature type="binding site" evidence="1">
    <location>
        <begin position="225"/>
        <end position="228"/>
    </location>
    <ligand>
        <name>substrate</name>
    </ligand>
</feature>
<feature type="binding site" evidence="1">
    <location>
        <position position="264"/>
    </location>
    <ligand>
        <name>substrate</name>
    </ligand>
</feature>
<feature type="binding site" evidence="1">
    <location>
        <position position="268"/>
    </location>
    <ligand>
        <name>Zn(2+)</name>
        <dbReference type="ChEBI" id="CHEBI:29105"/>
    </ligand>
</feature>
<feature type="binding site" evidence="1">
    <location>
        <position position="291"/>
    </location>
    <ligand>
        <name>substrate</name>
    </ligand>
</feature>
<feature type="binding site" evidence="1">
    <location>
        <position position="332"/>
    </location>
    <ligand>
        <name>Zn(2+)</name>
        <dbReference type="ChEBI" id="CHEBI:29105"/>
    </ligand>
</feature>
<feature type="binding site" evidence="1">
    <location>
        <position position="408"/>
    </location>
    <ligand>
        <name>[4Fe-4S] cluster</name>
        <dbReference type="ChEBI" id="CHEBI:49883"/>
        <note>4Fe-4S-S-AdoMet</note>
    </ligand>
</feature>
<feature type="binding site" evidence="1">
    <location>
        <position position="411"/>
    </location>
    <ligand>
        <name>[4Fe-4S] cluster</name>
        <dbReference type="ChEBI" id="CHEBI:49883"/>
        <note>4Fe-4S-S-AdoMet</note>
    </ligand>
</feature>
<feature type="binding site" evidence="1">
    <location>
        <position position="415"/>
    </location>
    <ligand>
        <name>[4Fe-4S] cluster</name>
        <dbReference type="ChEBI" id="CHEBI:49883"/>
        <note>4Fe-4S-S-AdoMet</note>
    </ligand>
</feature>
<keyword id="KW-0004">4Fe-4S</keyword>
<keyword id="KW-0408">Iron</keyword>
<keyword id="KW-0411">Iron-sulfur</keyword>
<keyword id="KW-0456">Lyase</keyword>
<keyword id="KW-0479">Metal-binding</keyword>
<keyword id="KW-1185">Reference proteome</keyword>
<keyword id="KW-0949">S-adenosyl-L-methionine</keyword>
<keyword id="KW-0784">Thiamine biosynthesis</keyword>
<keyword id="KW-0862">Zinc</keyword>
<gene>
    <name evidence="1" type="primary">thiC</name>
    <name type="ordered locus">STK_18640</name>
</gene>
<comment type="function">
    <text evidence="1">Catalyzes the synthesis of the hydroxymethylpyrimidine phosphate (HMP-P) moiety of thiamine from aminoimidazole ribotide (AIR) in a radical S-adenosyl-L-methionine (SAM)-dependent reaction.</text>
</comment>
<comment type="catalytic activity">
    <reaction evidence="1">
        <text>5-amino-1-(5-phospho-beta-D-ribosyl)imidazole + S-adenosyl-L-methionine = 4-amino-2-methyl-5-(phosphooxymethyl)pyrimidine + CO + 5'-deoxyadenosine + formate + L-methionine + 3 H(+)</text>
        <dbReference type="Rhea" id="RHEA:24840"/>
        <dbReference type="ChEBI" id="CHEBI:15378"/>
        <dbReference type="ChEBI" id="CHEBI:15740"/>
        <dbReference type="ChEBI" id="CHEBI:17245"/>
        <dbReference type="ChEBI" id="CHEBI:17319"/>
        <dbReference type="ChEBI" id="CHEBI:57844"/>
        <dbReference type="ChEBI" id="CHEBI:58354"/>
        <dbReference type="ChEBI" id="CHEBI:59789"/>
        <dbReference type="ChEBI" id="CHEBI:137981"/>
        <dbReference type="EC" id="4.1.99.17"/>
    </reaction>
</comment>
<comment type="cofactor">
    <cofactor evidence="1">
        <name>[4Fe-4S] cluster</name>
        <dbReference type="ChEBI" id="CHEBI:49883"/>
    </cofactor>
    <text evidence="1">Binds 1 [4Fe-4S] cluster per subunit. The cluster is coordinated with 3 cysteines and an exchangeable S-adenosyl-L-methionine.</text>
</comment>
<comment type="pathway">
    <text evidence="1">Cofactor biosynthesis; thiamine diphosphate biosynthesis.</text>
</comment>
<comment type="similarity">
    <text evidence="1">Belongs to the ThiC family.</text>
</comment>
<protein>
    <recommendedName>
        <fullName evidence="1">Phosphomethylpyrimidine synthase</fullName>
        <ecNumber evidence="1">4.1.99.17</ecNumber>
    </recommendedName>
    <alternativeName>
        <fullName evidence="1">Hydroxymethylpyrimidine phosphate synthase</fullName>
        <shortName evidence="1">HMP-P synthase</shortName>
        <shortName evidence="1">HMP-phosphate synthase</shortName>
        <shortName evidence="1">HMPP synthase</shortName>
    </alternativeName>
    <alternativeName>
        <fullName evidence="1">Thiamine biosynthesis protein ThiC</fullName>
    </alternativeName>
</protein>
<evidence type="ECO:0000255" key="1">
    <source>
        <dbReference type="HAMAP-Rule" id="MF_00089"/>
    </source>
</evidence>